<feature type="peptide" id="PRO_0000392476" description="SabFMRFamide-17" evidence="2">
    <location>
        <begin position="1"/>
        <end position="7"/>
    </location>
</feature>
<feature type="modified residue" description="Phenylalanine amide" evidence="2">
    <location>
        <position position="7"/>
    </location>
</feature>
<sequence>PDNFMRF</sequence>
<keyword id="KW-0027">Amidation</keyword>
<keyword id="KW-0903">Direct protein sequencing</keyword>
<keyword id="KW-0527">Neuropeptide</keyword>
<keyword id="KW-0964">Secreted</keyword>
<protein>
    <recommendedName>
        <fullName evidence="3">SabFMRFamide-17</fullName>
    </recommendedName>
</protein>
<proteinExistence type="evidence at protein level"/>
<accession>P85474</accession>
<name>FAR17_SARBU</name>
<comment type="subcellular location">
    <subcellularLocation>
        <location evidence="4">Secreted</location>
    </subcellularLocation>
</comment>
<comment type="mass spectrometry"/>
<comment type="similarity">
    <text evidence="1">Belongs to the FARP (FMRFamide related peptide) family.</text>
</comment>
<reference evidence="4" key="1">
    <citation type="journal article" date="2009" name="Gen. Comp. Endocrinol.">
        <title>Extended FMRFamides in dipteran insects: conservative expression in the neuroendocrine system is accompanied by rapid sequence evolution.</title>
        <authorList>
            <person name="Rahman M.M."/>
            <person name="Fromm B."/>
            <person name="Neupert S."/>
            <person name="Kreusch S."/>
            <person name="Predel R."/>
        </authorList>
    </citation>
    <scope>PROTEIN SEQUENCE</scope>
    <scope>MASS SPECTROMETRY</scope>
    <scope>AMIDATION AT PHE-7</scope>
    <source>
        <tissue evidence="2">Dorsal ganglionic sheath</tissue>
    </source>
</reference>
<organism>
    <name type="scientific">Sarcophaga bullata</name>
    <name type="common">Grey flesh fly</name>
    <name type="synonym">Neobellieria bullata</name>
    <dbReference type="NCBI Taxonomy" id="7385"/>
    <lineage>
        <taxon>Eukaryota</taxon>
        <taxon>Metazoa</taxon>
        <taxon>Ecdysozoa</taxon>
        <taxon>Arthropoda</taxon>
        <taxon>Hexapoda</taxon>
        <taxon>Insecta</taxon>
        <taxon>Pterygota</taxon>
        <taxon>Neoptera</taxon>
        <taxon>Endopterygota</taxon>
        <taxon>Diptera</taxon>
        <taxon>Brachycera</taxon>
        <taxon>Muscomorpha</taxon>
        <taxon>Oestroidea</taxon>
        <taxon>Sarcophagidae</taxon>
        <taxon>Sarcophaga</taxon>
        <taxon>Neobellieria</taxon>
    </lineage>
</organism>
<evidence type="ECO:0000255" key="1"/>
<evidence type="ECO:0000269" key="2">
    <source>
    </source>
</evidence>
<evidence type="ECO:0000303" key="3">
    <source>
    </source>
</evidence>
<evidence type="ECO:0000305" key="4"/>
<dbReference type="GO" id="GO:0005576">
    <property type="term" value="C:extracellular region"/>
    <property type="evidence" value="ECO:0007669"/>
    <property type="project" value="UniProtKB-SubCell"/>
</dbReference>
<dbReference type="GO" id="GO:0007218">
    <property type="term" value="P:neuropeptide signaling pathway"/>
    <property type="evidence" value="ECO:0007669"/>
    <property type="project" value="UniProtKB-KW"/>
</dbReference>